<dbReference type="EC" id="3.1.1.3" evidence="4"/>
<dbReference type="EMBL" id="Z27116">
    <property type="protein sequence ID" value="CAA81640.1"/>
    <property type="molecule type" value="Genomic_DNA"/>
</dbReference>
<dbReference type="EMBL" id="Z28314">
    <property type="protein sequence ID" value="CAA82168.1"/>
    <property type="molecule type" value="Genomic_DNA"/>
</dbReference>
<dbReference type="EMBL" id="BK006944">
    <property type="protein sequence ID" value="DAA09239.1"/>
    <property type="molecule type" value="Genomic_DNA"/>
</dbReference>
<dbReference type="PIR" id="S38167">
    <property type="entry name" value="S38167"/>
</dbReference>
<dbReference type="RefSeq" id="NP_013015.1">
    <property type="nucleotide sequence ID" value="NM_001179879.1"/>
</dbReference>
<dbReference type="BioGRID" id="34220">
    <property type="interactions" value="73"/>
</dbReference>
<dbReference type="DIP" id="DIP-5588N"/>
<dbReference type="FunCoup" id="P36165">
    <property type="interactions" value="137"/>
</dbReference>
<dbReference type="IntAct" id="P36165">
    <property type="interactions" value="10"/>
</dbReference>
<dbReference type="MINT" id="P36165"/>
<dbReference type="STRING" id="4932.YKR089C"/>
<dbReference type="SwissLipids" id="SLP:000000053"/>
<dbReference type="SwissLipids" id="SLP:000000672"/>
<dbReference type="iPTMnet" id="P36165"/>
<dbReference type="PaxDb" id="4932-YKR089C"/>
<dbReference type="PeptideAtlas" id="P36165"/>
<dbReference type="EnsemblFungi" id="YKR089C_mRNA">
    <property type="protein sequence ID" value="YKR089C"/>
    <property type="gene ID" value="YKR089C"/>
</dbReference>
<dbReference type="GeneID" id="853964"/>
<dbReference type="KEGG" id="sce:YKR089C"/>
<dbReference type="AGR" id="SGD:S000001797"/>
<dbReference type="SGD" id="S000001797">
    <property type="gene designation" value="TGL4"/>
</dbReference>
<dbReference type="VEuPathDB" id="FungiDB:YKR089C"/>
<dbReference type="eggNOG" id="KOG2214">
    <property type="taxonomic scope" value="Eukaryota"/>
</dbReference>
<dbReference type="GeneTree" id="ENSGT00940000176365"/>
<dbReference type="HOGENOM" id="CLU_009031_4_0_1"/>
<dbReference type="InParanoid" id="P36165"/>
<dbReference type="OMA" id="NFMANEA"/>
<dbReference type="OrthoDB" id="10049244at2759"/>
<dbReference type="BioCyc" id="MetaCyc:G3O-32052-MONOMER"/>
<dbReference type="BioCyc" id="YEAST:G3O-32052-MONOMER"/>
<dbReference type="BioGRID-ORCS" id="853964">
    <property type="hits" value="4 hits in 10 CRISPR screens"/>
</dbReference>
<dbReference type="PRO" id="PR:P36165"/>
<dbReference type="Proteomes" id="UP000002311">
    <property type="component" value="Chromosome XI"/>
</dbReference>
<dbReference type="RNAct" id="P36165">
    <property type="molecule type" value="protein"/>
</dbReference>
<dbReference type="GO" id="GO:0005811">
    <property type="term" value="C:lipid droplet"/>
    <property type="evidence" value="ECO:0000314"/>
    <property type="project" value="SGD"/>
</dbReference>
<dbReference type="GO" id="GO:0047499">
    <property type="term" value="F:calcium-independent phospholipase A2 activity"/>
    <property type="evidence" value="ECO:0000314"/>
    <property type="project" value="SGD"/>
</dbReference>
<dbReference type="GO" id="GO:0042171">
    <property type="term" value="F:lysophosphatidic acid acyltransferase activity"/>
    <property type="evidence" value="ECO:0000314"/>
    <property type="project" value="SGD"/>
</dbReference>
<dbReference type="GO" id="GO:0004771">
    <property type="term" value="F:sterol ester esterase activity"/>
    <property type="evidence" value="ECO:0000314"/>
    <property type="project" value="SGD"/>
</dbReference>
<dbReference type="GO" id="GO:0004806">
    <property type="term" value="F:triacylglycerol lipase activity"/>
    <property type="evidence" value="ECO:0000314"/>
    <property type="project" value="SGD"/>
</dbReference>
<dbReference type="GO" id="GO:0007114">
    <property type="term" value="P:cell budding"/>
    <property type="evidence" value="ECO:0000315"/>
    <property type="project" value="SGD"/>
</dbReference>
<dbReference type="GO" id="GO:0006644">
    <property type="term" value="P:phospholipid metabolic process"/>
    <property type="evidence" value="ECO:0000315"/>
    <property type="project" value="SGD"/>
</dbReference>
<dbReference type="GO" id="GO:0030435">
    <property type="term" value="P:sporulation resulting in formation of a cellular spore"/>
    <property type="evidence" value="ECO:0007669"/>
    <property type="project" value="UniProtKB-KW"/>
</dbReference>
<dbReference type="GO" id="GO:0019433">
    <property type="term" value="P:triglyceride catabolic process"/>
    <property type="evidence" value="ECO:0000315"/>
    <property type="project" value="SGD"/>
</dbReference>
<dbReference type="GO" id="GO:0006642">
    <property type="term" value="P:triglyceride mobilization"/>
    <property type="evidence" value="ECO:0000314"/>
    <property type="project" value="SGD"/>
</dbReference>
<dbReference type="CDD" id="cd07230">
    <property type="entry name" value="Pat_TGL4-5_like"/>
    <property type="match status" value="1"/>
</dbReference>
<dbReference type="FunFam" id="3.40.1090.10:FF:000037">
    <property type="entry name" value="Lipase 4"/>
    <property type="match status" value="1"/>
</dbReference>
<dbReference type="Gene3D" id="3.40.1090.10">
    <property type="entry name" value="Cytosolic phospholipase A2 catalytic domain"/>
    <property type="match status" value="1"/>
</dbReference>
<dbReference type="InterPro" id="IPR016035">
    <property type="entry name" value="Acyl_Trfase/lysoPLipase"/>
</dbReference>
<dbReference type="InterPro" id="IPR050301">
    <property type="entry name" value="NTE"/>
</dbReference>
<dbReference type="InterPro" id="IPR002641">
    <property type="entry name" value="PNPLA_dom"/>
</dbReference>
<dbReference type="InterPro" id="IPR021771">
    <property type="entry name" value="Triacylglycerol_lipase_N"/>
</dbReference>
<dbReference type="PANTHER" id="PTHR14226">
    <property type="entry name" value="NEUROPATHY TARGET ESTERASE/SWISS CHEESE D.MELANOGASTER"/>
    <property type="match status" value="1"/>
</dbReference>
<dbReference type="PANTHER" id="PTHR14226:SF10">
    <property type="entry name" value="TRIACYLGLYCEROL LIPASE 4-RELATED"/>
    <property type="match status" value="1"/>
</dbReference>
<dbReference type="Pfam" id="PF11815">
    <property type="entry name" value="DUF3336"/>
    <property type="match status" value="1"/>
</dbReference>
<dbReference type="Pfam" id="PF01734">
    <property type="entry name" value="Patatin"/>
    <property type="match status" value="1"/>
</dbReference>
<dbReference type="SUPFAM" id="SSF52151">
    <property type="entry name" value="FabD/lysophospholipase-like"/>
    <property type="match status" value="1"/>
</dbReference>
<dbReference type="PROSITE" id="PS51635">
    <property type="entry name" value="PNPLA"/>
    <property type="match status" value="1"/>
</dbReference>
<sequence>MSSKISDLTSTQNKPLLVTQQLIEKYYEQILGTSQNIIPILNPKNKFIRPSKDNSDVERVEEDAGKRLQTGKNKTTNKVNFNLDTGNEDKLDDDQETVTENENNDIEMVETDEGEDERQGSSLASKCKSFLYNVFVGNYERDILIDKVCSQKQHAMSFEEWCSAGARLDDLTGKTEWKQKLESPLYDYKLIKDLTSRMREERLNRNYAQLLYIIRTNWVRNLGNMGNVNLYRHSHVGTKYLIDEYMMESRLALESLMESDLDDSYLLGILQQTRRNIGRTALVLSGGGTFGLFHIGVLGTLFELDLLPRVISGSSAGAIVASILSVHHKEEIPVLLNHILDKEFNIFKDDKQKSESENLLIKISRFFKNGTWFDNKHLVNTMIEFLGDLTFREAYNRTGKILNITVSPASLFEQPRLLNNLTAPNVLIWSAVCASCSLPGIFPSSPLYEKDPKTGERKPWTGSSSVKFVDGSVDNDLPISRLSEMFNVDHIIACQVNIHVFPFLKLSLSCVGGEIEDEFSARLKQNLSSIYNFMANEAIHILEIGSEMGIAKNALTKLRSVLSQQYSGDITILPDMCMLFRIKELLSNPTKEFLLREITNGAKATWPKVSIIQNHCGQEFALDKAISYIKGRMIVTSSLKTPFQFADSVIGLIKAPEQTSDESKNPENSTLLTRTPTKGDNHISNVLDDNLLESESTNSLLLLRENASTYGRSPSGFRPRYSITSASLNPRHQRRKSDTISTSRRPAKSFSFSVASPTSRMLRQSSKINGHPPPILQKKTSMGRLMFPMDAKTYDPESHELIPHSASIETPAMVDKKLHFGRKSRYLRHMNKKWVSSSNILYTDSDKEDHPTLRLISNFDSDAMIHSDLAGNFRRHSIDGRPPSQATKSSPFRSRPSSSTQHKSTTSFTQ</sequence>
<organism>
    <name type="scientific">Saccharomyces cerevisiae (strain ATCC 204508 / S288c)</name>
    <name type="common">Baker's yeast</name>
    <dbReference type="NCBI Taxonomy" id="559292"/>
    <lineage>
        <taxon>Eukaryota</taxon>
        <taxon>Fungi</taxon>
        <taxon>Dikarya</taxon>
        <taxon>Ascomycota</taxon>
        <taxon>Saccharomycotina</taxon>
        <taxon>Saccharomycetes</taxon>
        <taxon>Saccharomycetales</taxon>
        <taxon>Saccharomycetaceae</taxon>
        <taxon>Saccharomyces</taxon>
    </lineage>
</organism>
<evidence type="ECO:0000255" key="1">
    <source>
        <dbReference type="PROSITE-ProRule" id="PRU01161"/>
    </source>
</evidence>
<evidence type="ECO:0000256" key="2">
    <source>
        <dbReference type="SAM" id="MobiDB-lite"/>
    </source>
</evidence>
<evidence type="ECO:0000269" key="3">
    <source>
    </source>
</evidence>
<evidence type="ECO:0000269" key="4">
    <source>
    </source>
</evidence>
<evidence type="ECO:0000269" key="5">
    <source>
    </source>
</evidence>
<evidence type="ECO:0000269" key="6">
    <source>
    </source>
</evidence>
<evidence type="ECO:0000269" key="7">
    <source>
    </source>
</evidence>
<evidence type="ECO:0000269" key="8">
    <source>
    </source>
</evidence>
<evidence type="ECO:0000269" key="9">
    <source>
    </source>
</evidence>
<evidence type="ECO:0000269" key="10">
    <source>
    </source>
</evidence>
<evidence type="ECO:0000305" key="11">
    <source>
    </source>
</evidence>
<evidence type="ECO:0000305" key="12">
    <source>
    </source>
</evidence>
<evidence type="ECO:0000305" key="13">
    <source>
    </source>
</evidence>
<evidence type="ECO:0007744" key="14">
    <source>
    </source>
</evidence>
<evidence type="ECO:0007744" key="15">
    <source>
    </source>
</evidence>
<evidence type="ECO:0007744" key="16">
    <source>
    </source>
</evidence>
<accession>P36165</accession>
<accession>D6VXE9</accession>
<gene>
    <name type="primary">TGL4</name>
    <name type="synonym">STC1</name>
    <name type="ordered locus">YKR089C</name>
    <name type="ORF">YKR409</name>
</gene>
<reference key="1">
    <citation type="journal article" date="1994" name="Yeast">
        <title>The complete sequence of an 18,002 bp segment of Saccharomyces cerevisiae chromosome XI contains the HBS1, MRP-L20 and PRP16 genes, and six new open reading frames.</title>
        <authorList>
            <person name="Garcia-Cantalejo J.M."/>
            <person name="Baladron V."/>
            <person name="Esteban P.F."/>
            <person name="Santos M.A."/>
            <person name="Bou G."/>
            <person name="Remacha M.A."/>
            <person name="Revuelta J.L."/>
            <person name="Ballesta J.P.G."/>
            <person name="Jimenez A."/>
            <person name="del Rey F."/>
        </authorList>
    </citation>
    <scope>NUCLEOTIDE SEQUENCE [GENOMIC DNA]</scope>
</reference>
<reference key="2">
    <citation type="journal article" date="1994" name="Nature">
        <title>Complete DNA sequence of yeast chromosome XI.</title>
        <authorList>
            <person name="Dujon B."/>
            <person name="Alexandraki D."/>
            <person name="Andre B."/>
            <person name="Ansorge W."/>
            <person name="Baladron V."/>
            <person name="Ballesta J.P.G."/>
            <person name="Banrevi A."/>
            <person name="Bolle P.-A."/>
            <person name="Bolotin-Fukuhara M."/>
            <person name="Bossier P."/>
            <person name="Bou G."/>
            <person name="Boyer J."/>
            <person name="Buitrago M.J."/>
            <person name="Cheret G."/>
            <person name="Colleaux L."/>
            <person name="Daignan-Fornier B."/>
            <person name="del Rey F."/>
            <person name="Dion C."/>
            <person name="Domdey H."/>
            <person name="Duesterhoeft A."/>
            <person name="Duesterhus S."/>
            <person name="Entian K.-D."/>
            <person name="Erfle H."/>
            <person name="Esteban P.F."/>
            <person name="Feldmann H."/>
            <person name="Fernandes L."/>
            <person name="Fobo G.M."/>
            <person name="Fritz C."/>
            <person name="Fukuhara H."/>
            <person name="Gabel C."/>
            <person name="Gaillon L."/>
            <person name="Garcia-Cantalejo J.M."/>
            <person name="Garcia-Ramirez J.J."/>
            <person name="Gent M.E."/>
            <person name="Ghazvini M."/>
            <person name="Goffeau A."/>
            <person name="Gonzalez A."/>
            <person name="Grothues D."/>
            <person name="Guerreiro P."/>
            <person name="Hegemann J.H."/>
            <person name="Hewitt N."/>
            <person name="Hilger F."/>
            <person name="Hollenberg C.P."/>
            <person name="Horaitis O."/>
            <person name="Indge K.J."/>
            <person name="Jacquier A."/>
            <person name="James C.M."/>
            <person name="Jauniaux J.-C."/>
            <person name="Jimenez A."/>
            <person name="Keuchel H."/>
            <person name="Kirchrath L."/>
            <person name="Kleine K."/>
            <person name="Koetter P."/>
            <person name="Legrain P."/>
            <person name="Liebl S."/>
            <person name="Louis E.J."/>
            <person name="Maia e Silva A."/>
            <person name="Marck C."/>
            <person name="Monnier A.-L."/>
            <person name="Moestl D."/>
            <person name="Mueller S."/>
            <person name="Obermaier B."/>
            <person name="Oliver S.G."/>
            <person name="Pallier C."/>
            <person name="Pascolo S."/>
            <person name="Pfeiffer F."/>
            <person name="Philippsen P."/>
            <person name="Planta R.J."/>
            <person name="Pohl F.M."/>
            <person name="Pohl T.M."/>
            <person name="Poehlmann R."/>
            <person name="Portetelle D."/>
            <person name="Purnelle B."/>
            <person name="Puzos V."/>
            <person name="Ramezani Rad M."/>
            <person name="Rasmussen S.W."/>
            <person name="Remacha M.A."/>
            <person name="Revuelta J.L."/>
            <person name="Richard G.-F."/>
            <person name="Rieger M."/>
            <person name="Rodrigues-Pousada C."/>
            <person name="Rose M."/>
            <person name="Rupp T."/>
            <person name="Santos M.A."/>
            <person name="Schwager C."/>
            <person name="Sensen C."/>
            <person name="Skala J."/>
            <person name="Soares H."/>
            <person name="Sor F."/>
            <person name="Stegemann J."/>
            <person name="Tettelin H."/>
            <person name="Thierry A."/>
            <person name="Tzermia M."/>
            <person name="Urrestarazu L.A."/>
            <person name="van Dyck L."/>
            <person name="van Vliet-Reedijk J.C."/>
            <person name="Valens M."/>
            <person name="Vandenbol M."/>
            <person name="Vilela C."/>
            <person name="Vissers S."/>
            <person name="von Wettstein D."/>
            <person name="Voss H."/>
            <person name="Wiemann S."/>
            <person name="Xu G."/>
            <person name="Zimmermann J."/>
            <person name="Haasemann M."/>
            <person name="Becker I."/>
            <person name="Mewes H.-W."/>
        </authorList>
    </citation>
    <scope>NUCLEOTIDE SEQUENCE [LARGE SCALE GENOMIC DNA]</scope>
    <source>
        <strain>ATCC 204508 / S288c</strain>
    </source>
</reference>
<reference key="3">
    <citation type="journal article" date="2014" name="G3 (Bethesda)">
        <title>The reference genome sequence of Saccharomyces cerevisiae: Then and now.</title>
        <authorList>
            <person name="Engel S.R."/>
            <person name="Dietrich F.S."/>
            <person name="Fisk D.G."/>
            <person name="Binkley G."/>
            <person name="Balakrishnan R."/>
            <person name="Costanzo M.C."/>
            <person name="Dwight S.S."/>
            <person name="Hitz B.C."/>
            <person name="Karra K."/>
            <person name="Nash R.S."/>
            <person name="Weng S."/>
            <person name="Wong E.D."/>
            <person name="Lloyd P."/>
            <person name="Skrzypek M.S."/>
            <person name="Miyasato S.R."/>
            <person name="Simison M."/>
            <person name="Cherry J.M."/>
        </authorList>
    </citation>
    <scope>GENOME REANNOTATION</scope>
    <source>
        <strain>ATCC 204508 / S288c</strain>
    </source>
</reference>
<reference key="4">
    <citation type="journal article" date="2003" name="Nature">
        <title>Global analysis of protein localization in budding yeast.</title>
        <authorList>
            <person name="Huh W.-K."/>
            <person name="Falvo J.V."/>
            <person name="Gerke L.C."/>
            <person name="Carroll A.S."/>
            <person name="Howson R.W."/>
            <person name="Weissman J.S."/>
            <person name="O'Shea E.K."/>
        </authorList>
    </citation>
    <scope>SUBCELLULAR LOCATION [LARGE SCALE ANALYSIS]</scope>
</reference>
<reference key="5">
    <citation type="journal article" date="2003" name="Nature">
        <title>Global analysis of protein expression in yeast.</title>
        <authorList>
            <person name="Ghaemmaghami S."/>
            <person name="Huh W.-K."/>
            <person name="Bower K."/>
            <person name="Howson R.W."/>
            <person name="Belle A."/>
            <person name="Dephoure N."/>
            <person name="O'Shea E.K."/>
            <person name="Weissman J.S."/>
        </authorList>
    </citation>
    <scope>LEVEL OF PROTEIN EXPRESSION [LARGE SCALE ANALYSIS]</scope>
</reference>
<reference key="6">
    <citation type="journal article" date="2005" name="J. Biol. Chem.">
        <title>Tgl4p and Tgl5p, two triacylglycerol lipases of the yeast Saccharomyces cerevisiae are localized to lipid particles.</title>
        <authorList>
            <person name="Athenstaedt K."/>
            <person name="Daum G."/>
        </authorList>
    </citation>
    <scope>FUNCTION</scope>
    <scope>CATALYTIC ACTIVITY</scope>
    <scope>SUBCELLULAR LOCATION</scope>
</reference>
<reference key="7">
    <citation type="journal article" date="2005" name="Mol. Cell. Proteomics">
        <title>Quantitative phosphoproteomics applied to the yeast pheromone signaling pathway.</title>
        <authorList>
            <person name="Gruhler A."/>
            <person name="Olsen J.V."/>
            <person name="Mohammed S."/>
            <person name="Mortensen P."/>
            <person name="Faergeman N.J."/>
            <person name="Mann M."/>
            <person name="Jensen O.N."/>
        </authorList>
    </citation>
    <scope>PHOSPHORYLATION [LARGE SCALE ANALYSIS] AT SER-751</scope>
    <scope>IDENTIFICATION BY MASS SPECTROMETRY [LARGE SCALE ANALYSIS]</scope>
    <source>
        <strain>YAL6B</strain>
    </source>
</reference>
<reference key="8">
    <citation type="journal article" date="2006" name="J. Biol. Chem.">
        <title>Obese yeast: triglyceride lipolysis is functionally conserved from mammals to yeast.</title>
        <authorList>
            <person name="Kurat C.F."/>
            <person name="Natter K."/>
            <person name="Petschnigg J."/>
            <person name="Wolinski H."/>
            <person name="Scheuringer K."/>
            <person name="Scholz H."/>
            <person name="Zimmermann R."/>
            <person name="Leber R."/>
            <person name="Zechner R."/>
            <person name="Kohlwein S.D."/>
        </authorList>
    </citation>
    <scope>FUNCTION</scope>
    <scope>CATALYTIC ACTIVITY</scope>
    <scope>SUBCELLULAR LOCATION</scope>
    <scope>DISRUPTION PHENOTYPE</scope>
</reference>
<reference key="9">
    <citation type="journal article" date="2007" name="Proc. Natl. Acad. Sci. U.S.A.">
        <title>Analysis of phosphorylation sites on proteins from Saccharomyces cerevisiae by electron transfer dissociation (ETD) mass spectrometry.</title>
        <authorList>
            <person name="Chi A."/>
            <person name="Huttenhower C."/>
            <person name="Geer L.Y."/>
            <person name="Coon J.J."/>
            <person name="Syka J.E.P."/>
            <person name="Bai D.L."/>
            <person name="Shabanowitz J."/>
            <person name="Burke D.J."/>
            <person name="Troyanskaya O.G."/>
            <person name="Hunt D.F."/>
        </authorList>
    </citation>
    <scope>IDENTIFICATION BY MASS SPECTROMETRY [LARGE SCALE ANALYSIS]</scope>
</reference>
<reference key="10">
    <citation type="journal article" date="2008" name="Mol. Cell. Proteomics">
        <title>A multidimensional chromatography technology for in-depth phosphoproteome analysis.</title>
        <authorList>
            <person name="Albuquerque C.P."/>
            <person name="Smolka M.B."/>
            <person name="Payne S.H."/>
            <person name="Bafna V."/>
            <person name="Eng J."/>
            <person name="Zhou H."/>
        </authorList>
    </citation>
    <scope>PHOSPHORYLATION [LARGE SCALE ANALYSIS] AT SER-737</scope>
    <scope>IDENTIFICATION BY MASS SPECTROMETRY [LARGE SCALE ANALYSIS]</scope>
</reference>
<reference key="11">
    <citation type="journal article" date="2009" name="Mol. Cell">
        <title>Cdk1/Cdc28-dependent activation of the major triacylglycerol lipase Tgl4 in yeast links lipolysis to cell-cycle progression.</title>
        <authorList>
            <person name="Kurat C.F."/>
            <person name="Wolinski H."/>
            <person name="Petschnigg J."/>
            <person name="Kaluarachchi S."/>
            <person name="Andrews B."/>
            <person name="Natter K."/>
            <person name="Kohlwein S.D."/>
        </authorList>
    </citation>
    <scope>FUNCTION</scope>
    <scope>SUBCELLULAR LOCATION</scope>
    <scope>ACTIVITY REGULATION</scope>
    <scope>PHOSPHORYLATION AT THR-675 AND SER-890</scope>
    <scope>MUTAGENESIS OF THR-675</scope>
</reference>
<reference key="12">
    <citation type="journal article" date="2009" name="Science">
        <title>Global analysis of Cdk1 substrate phosphorylation sites provides insights into evolution.</title>
        <authorList>
            <person name="Holt L.J."/>
            <person name="Tuch B.B."/>
            <person name="Villen J."/>
            <person name="Johnson A.D."/>
            <person name="Gygi S.P."/>
            <person name="Morgan D.O."/>
        </authorList>
    </citation>
    <scope>PHOSPHORYLATION [LARGE SCALE ANALYSIS] AT SER-55; SER-749; SER-751 AND SER-836</scope>
    <scope>IDENTIFICATION BY MASS SPECTROMETRY [LARGE SCALE ANALYSIS]</scope>
</reference>
<reference key="13">
    <citation type="journal article" date="2010" name="J. Biol. Chem.">
        <title>Multiple functions as lipase, steryl ester hydrolase, phospholipase, and acyltransferase of Tgl4p from the yeast Saccharomyces cerevisiae.</title>
        <authorList>
            <person name="Rajakumari S."/>
            <person name="Daum G."/>
        </authorList>
    </citation>
    <scope>FUNCTION</scope>
    <scope>CATALYTIC ACTIVITY</scope>
    <scope>BIOPHYSICOCHEMICAL PROPERTIES</scope>
</reference>
<reference key="14">
    <citation type="journal article" date="2011" name="Biochim. Biophys. Acta">
        <title>Lipid particles/droplets of the yeast Saccharomyces cerevisiae revisited: lipidome meets proteome.</title>
        <authorList>
            <person name="Grillitsch K."/>
            <person name="Connerth M."/>
            <person name="Kofeler H."/>
            <person name="Arrey T.N."/>
            <person name="Rietschel B."/>
            <person name="Wagner B."/>
            <person name="Karas M."/>
            <person name="Daum G."/>
        </authorList>
    </citation>
    <scope>SUBCELLULAR LOCATION</scope>
</reference>
<reference key="15">
    <citation type="journal article" date="2014" name="J. Lipid Res.">
        <title>High-confidence proteomic analysis of yeast lipid droplets identifies additional droplet proteins and reveals connections to dolichol synthesis and sterol acetylation.</title>
        <authorList>
            <person name="Currie E."/>
            <person name="Guo X."/>
            <person name="Christiano R."/>
            <person name="Chitraju C."/>
            <person name="Kory N."/>
            <person name="Harrison K."/>
            <person name="Haas J."/>
            <person name="Walther T.C."/>
            <person name="Farese R.V. Jr."/>
        </authorList>
    </citation>
    <scope>SUBCELLULAR LOCATION</scope>
</reference>
<reference key="16">
    <citation type="journal article" date="2016" name="Mol. Biol. Cell">
        <title>Regulation of the yeast triacylglycerol lipases Tgl4p and Tgl5p by the presence/absence of nonpolar lipids.</title>
        <authorList>
            <person name="Klein I."/>
            <person name="Klug L."/>
            <person name="Schmidt C."/>
            <person name="Zandl M."/>
            <person name="Korber M."/>
            <person name="Daum G."/>
            <person name="Athenstaedt K."/>
        </authorList>
    </citation>
    <scope>ACTIVITY REGULATION</scope>
</reference>
<comment type="function">
    <text evidence="4 5 6 7">Lipid particle-localized triacylglycerol (TAG) lipase. The lipid droplet/particle is a lipid storage compartment which serves as a depot of energy and building blocks for membrane lipid biosynthesis. Involved in the mobilization of the non-polar storage lipids triacylglycerols (TAGs) from lipid particles by hydrolysis of TAGs, releasing and supplying specific fatty acids to the appropriate metabolic pathways (PubMed:16135509, PubMed:16267052). Also has steryl ester (SE) hydrolase and phospholipase A(2) (PLA(2)) activities, and catalyzes the acylation of lysophosphatidic acid (LPA) (PubMed:20332534). Contributes to early bud formation in late G1 phase of the cell cycle upon phosphorylation and activation by cyclin-dependent kinase 1 (Cdk1/CDC28) (PubMed:19150427).</text>
</comment>
<comment type="catalytic activity">
    <reaction evidence="4">
        <text>a triacylglycerol + H2O = a diacylglycerol + a fatty acid + H(+)</text>
        <dbReference type="Rhea" id="RHEA:12044"/>
        <dbReference type="ChEBI" id="CHEBI:15377"/>
        <dbReference type="ChEBI" id="CHEBI:15378"/>
        <dbReference type="ChEBI" id="CHEBI:17855"/>
        <dbReference type="ChEBI" id="CHEBI:18035"/>
        <dbReference type="ChEBI" id="CHEBI:28868"/>
        <dbReference type="EC" id="3.1.1.3"/>
    </reaction>
    <physiologicalReaction direction="left-to-right" evidence="11">
        <dbReference type="Rhea" id="RHEA:12045"/>
    </physiologicalReaction>
</comment>
<comment type="catalytic activity">
    <reaction evidence="5 7">
        <text>1,2,3-tri-(9Z-octadecenoyl)-glycerol + H2O = di-(9Z)-octadecenoylglycerol + (9Z)-octadecenoate + H(+)</text>
        <dbReference type="Rhea" id="RHEA:38575"/>
        <dbReference type="ChEBI" id="CHEBI:15377"/>
        <dbReference type="ChEBI" id="CHEBI:15378"/>
        <dbReference type="ChEBI" id="CHEBI:30823"/>
        <dbReference type="ChEBI" id="CHEBI:53753"/>
        <dbReference type="ChEBI" id="CHEBI:75945"/>
    </reaction>
    <physiologicalReaction direction="left-to-right" evidence="12 13">
        <dbReference type="Rhea" id="RHEA:38576"/>
    </physiologicalReaction>
</comment>
<comment type="catalytic activity">
    <reaction evidence="7">
        <text>1,2-dihexadecanoyl-sn-glycero-3-phosphocholine + H2O = 1-hexadecanoyl-sn-glycero-3-phosphocholine + hexadecanoate + H(+)</text>
        <dbReference type="Rhea" id="RHEA:41223"/>
        <dbReference type="ChEBI" id="CHEBI:7896"/>
        <dbReference type="ChEBI" id="CHEBI:15377"/>
        <dbReference type="ChEBI" id="CHEBI:15378"/>
        <dbReference type="ChEBI" id="CHEBI:72998"/>
        <dbReference type="ChEBI" id="CHEBI:72999"/>
    </reaction>
    <physiologicalReaction direction="left-to-right" evidence="13">
        <dbReference type="Rhea" id="RHEA:41224"/>
    </physiologicalReaction>
</comment>
<comment type="catalytic activity">
    <reaction evidence="7">
        <text>cholesteryl (9Z-octadecenoate) + H2O = cholesterol + (9Z)-octadecenoate + H(+)</text>
        <dbReference type="Rhea" id="RHEA:33875"/>
        <dbReference type="ChEBI" id="CHEBI:15377"/>
        <dbReference type="ChEBI" id="CHEBI:15378"/>
        <dbReference type="ChEBI" id="CHEBI:16113"/>
        <dbReference type="ChEBI" id="CHEBI:30823"/>
        <dbReference type="ChEBI" id="CHEBI:46898"/>
    </reaction>
    <physiologicalReaction direction="left-to-right" evidence="13">
        <dbReference type="Rhea" id="RHEA:33876"/>
    </physiologicalReaction>
</comment>
<comment type="catalytic activity">
    <reaction evidence="7">
        <text>1-(9Z-octadecenoyl)-sn-glycero-3-phosphate + (9Z)-octadecenoyl-CoA = 1,2-di-(9Z-octadecenoyl)-sn-glycero-3-phosphate + CoA</text>
        <dbReference type="Rhea" id="RHEA:37131"/>
        <dbReference type="ChEBI" id="CHEBI:57287"/>
        <dbReference type="ChEBI" id="CHEBI:57387"/>
        <dbReference type="ChEBI" id="CHEBI:74544"/>
        <dbReference type="ChEBI" id="CHEBI:74546"/>
    </reaction>
    <physiologicalReaction direction="left-to-right" evidence="13">
        <dbReference type="Rhea" id="RHEA:37132"/>
    </physiologicalReaction>
</comment>
<comment type="activity regulation">
    <text evidence="6 10">Phosphorylated and activated by cyclin-dependent kinase 1 (Cdk1/CDC28) (PubMed:19150427). Loses its lipolytic activity in cells lacking nonpolar lipids, but retains its side activity as lysophospholipid acyltransferase (PubMed:27170177).</text>
</comment>
<comment type="biophysicochemical properties">
    <kinetics>
        <KM evidence="7">14.3 uM for 1-(9Z-octadecenoyl)-sn-glycero-3-phosphate</KM>
        <KM evidence="7">15.1 uM for (9Z)-octadecenoyl-CoA</KM>
        <Vmax evidence="7">11.4 nmol/min/mg enzyme towards 1-(9Z-octadecenoyl)-sn-glycero-3-phosphate</Vmax>
        <Vmax evidence="7">11.98 nmol/min/mg enzyme towards (9Z)-octadecenoyl-CoA</Vmax>
    </kinetics>
    <phDependence>
        <text evidence="7">Optimum pH is 7-9 for the lysophosphatidic acid acyltransferase (LPAAT) reaction.</text>
    </phDependence>
</comment>
<comment type="subcellular location">
    <subcellularLocation>
        <location evidence="4 5 6 8 9 10">Lipid droplet</location>
    </subcellularLocation>
    <text evidence="10">Partially retained in the endoplasmic reticulum in cells lacking triacylglycerols.</text>
</comment>
<comment type="PTM">
    <text evidence="6">Phosphorylation at Thr-675 and Ser-890 by Cdk1/CDC28 stimulates enzyme activity in vivo.</text>
</comment>
<comment type="disruption phenotype">
    <text evidence="5">A double deletion of TGL3 and TGL4, the 2 major TGA lipases, leads to fat yeast, rendering growing cells unable to degrade triglycerides.</text>
</comment>
<comment type="miscellaneous">
    <text evidence="3">Present with 195 molecules/cell in log phase SD medium.</text>
</comment>
<proteinExistence type="evidence at protein level"/>
<feature type="chain" id="PRO_0000203227" description="Triacylglycerol lipase 4">
    <location>
        <begin position="1"/>
        <end position="910"/>
    </location>
</feature>
<feature type="domain" description="PNPLA" evidence="1">
    <location>
        <begin position="282"/>
        <end position="483"/>
    </location>
</feature>
<feature type="region of interest" description="Disordered" evidence="2">
    <location>
        <begin position="51"/>
        <end position="120"/>
    </location>
</feature>
<feature type="region of interest" description="Disordered" evidence="2">
    <location>
        <begin position="657"/>
        <end position="683"/>
    </location>
</feature>
<feature type="region of interest" description="Disordered" evidence="2">
    <location>
        <begin position="713"/>
        <end position="777"/>
    </location>
</feature>
<feature type="region of interest" description="Disordered" evidence="2">
    <location>
        <begin position="874"/>
        <end position="910"/>
    </location>
</feature>
<feature type="short sequence motif" description="GXGXXG" evidence="1">
    <location>
        <begin position="286"/>
        <end position="291"/>
    </location>
</feature>
<feature type="short sequence motif" description="GXSXG" evidence="1">
    <location>
        <begin position="313"/>
        <end position="317"/>
    </location>
</feature>
<feature type="compositionally biased region" description="Basic and acidic residues" evidence="2">
    <location>
        <begin position="51"/>
        <end position="66"/>
    </location>
</feature>
<feature type="compositionally biased region" description="Polar residues" evidence="2">
    <location>
        <begin position="70"/>
        <end position="85"/>
    </location>
</feature>
<feature type="compositionally biased region" description="Acidic residues" evidence="2">
    <location>
        <begin position="90"/>
        <end position="116"/>
    </location>
</feature>
<feature type="compositionally biased region" description="Polar residues" evidence="2">
    <location>
        <begin position="666"/>
        <end position="683"/>
    </location>
</feature>
<feature type="compositionally biased region" description="Polar residues" evidence="2">
    <location>
        <begin position="739"/>
        <end position="768"/>
    </location>
</feature>
<feature type="compositionally biased region" description="Low complexity" evidence="2">
    <location>
        <begin position="889"/>
        <end position="899"/>
    </location>
</feature>
<feature type="compositionally biased region" description="Polar residues" evidence="2">
    <location>
        <begin position="900"/>
        <end position="910"/>
    </location>
</feature>
<feature type="active site" description="Nucleophile" evidence="1">
    <location>
        <position position="315"/>
    </location>
</feature>
<feature type="active site" description="Proton acceptor" evidence="1">
    <location>
        <position position="470"/>
    </location>
</feature>
<feature type="modified residue" description="Phosphoserine" evidence="16">
    <location>
        <position position="55"/>
    </location>
</feature>
<feature type="modified residue" description="Phosphothreonine; by Cdk1" evidence="6">
    <location>
        <position position="675"/>
    </location>
</feature>
<feature type="modified residue" description="Phosphoserine" evidence="15">
    <location>
        <position position="737"/>
    </location>
</feature>
<feature type="modified residue" description="Phosphoserine" evidence="16">
    <location>
        <position position="749"/>
    </location>
</feature>
<feature type="modified residue" description="Phosphoserine" evidence="14 16">
    <location>
        <position position="751"/>
    </location>
</feature>
<feature type="modified residue" description="Phosphoserine" evidence="16">
    <location>
        <position position="836"/>
    </location>
</feature>
<feature type="modified residue" description="Phosphoserine; by Cdk1" evidence="6">
    <location>
        <position position="890"/>
    </location>
</feature>
<feature type="mutagenesis site" description="Highly stimulates TGA lipolysis." evidence="6">
    <original>T</original>
    <variation>E</variation>
    <location>
        <position position="675"/>
    </location>
</feature>
<keyword id="KW-0378">Hydrolase</keyword>
<keyword id="KW-0442">Lipid degradation</keyword>
<keyword id="KW-0551">Lipid droplet</keyword>
<keyword id="KW-0443">Lipid metabolism</keyword>
<keyword id="KW-0597">Phosphoprotein</keyword>
<keyword id="KW-1185">Reference proteome</keyword>
<keyword id="KW-0749">Sporulation</keyword>
<protein>
    <recommendedName>
        <fullName>Triacylglycerol lipase 4</fullName>
        <ecNumber evidence="4">3.1.1.3</ecNumber>
    </recommendedName>
    <alternativeName>
        <fullName>Lipase 4</fullName>
    </alternativeName>
</protein>
<name>TGL4_YEAST</name>